<evidence type="ECO:0000255" key="1">
    <source>
        <dbReference type="HAMAP-Rule" id="MF_01306"/>
    </source>
</evidence>
<evidence type="ECO:0000305" key="2"/>
<dbReference type="EMBL" id="CP000575">
    <property type="protein sequence ID" value="ABN69914.1"/>
    <property type="molecule type" value="Genomic_DNA"/>
</dbReference>
<dbReference type="RefSeq" id="WP_011839105.1">
    <property type="nucleotide sequence ID" value="NC_009033.1"/>
</dbReference>
<dbReference type="SMR" id="A3DMQ4"/>
<dbReference type="STRING" id="399550.Smar_0813"/>
<dbReference type="GeneID" id="4907901"/>
<dbReference type="KEGG" id="smr:Smar_0813"/>
<dbReference type="eggNOG" id="arCOG04239">
    <property type="taxonomic scope" value="Archaea"/>
</dbReference>
<dbReference type="HOGENOM" id="CLU_089738_1_1_2"/>
<dbReference type="OrthoDB" id="10429at2157"/>
<dbReference type="Proteomes" id="UP000000254">
    <property type="component" value="Chromosome"/>
</dbReference>
<dbReference type="GO" id="GO:0015935">
    <property type="term" value="C:small ribosomal subunit"/>
    <property type="evidence" value="ECO:0007669"/>
    <property type="project" value="InterPro"/>
</dbReference>
<dbReference type="GO" id="GO:0019843">
    <property type="term" value="F:rRNA binding"/>
    <property type="evidence" value="ECO:0007669"/>
    <property type="project" value="UniProtKB-UniRule"/>
</dbReference>
<dbReference type="GO" id="GO:0003735">
    <property type="term" value="F:structural constituent of ribosome"/>
    <property type="evidence" value="ECO:0007669"/>
    <property type="project" value="InterPro"/>
</dbReference>
<dbReference type="GO" id="GO:0042274">
    <property type="term" value="P:ribosomal small subunit biogenesis"/>
    <property type="evidence" value="ECO:0007669"/>
    <property type="project" value="TreeGrafter"/>
</dbReference>
<dbReference type="GO" id="GO:0006412">
    <property type="term" value="P:translation"/>
    <property type="evidence" value="ECO:0007669"/>
    <property type="project" value="UniProtKB-UniRule"/>
</dbReference>
<dbReference type="CDD" id="cd00165">
    <property type="entry name" value="S4"/>
    <property type="match status" value="1"/>
</dbReference>
<dbReference type="Gene3D" id="3.10.290.10">
    <property type="entry name" value="RNA-binding S4 domain"/>
    <property type="match status" value="1"/>
</dbReference>
<dbReference type="HAMAP" id="MF_01306_A">
    <property type="entry name" value="Ribosomal_uS4_A"/>
    <property type="match status" value="1"/>
</dbReference>
<dbReference type="InterPro" id="IPR022801">
    <property type="entry name" value="Ribosomal_uS4"/>
</dbReference>
<dbReference type="InterPro" id="IPR022802">
    <property type="entry name" value="Ribosomal_uS4_arc"/>
</dbReference>
<dbReference type="InterPro" id="IPR018079">
    <property type="entry name" value="Ribosomal_uS4_CS"/>
</dbReference>
<dbReference type="InterPro" id="IPR005710">
    <property type="entry name" value="Ribosomal_uS4_euk/arc"/>
</dbReference>
<dbReference type="InterPro" id="IPR001912">
    <property type="entry name" value="Ribosomal_uS4_N"/>
</dbReference>
<dbReference type="InterPro" id="IPR002942">
    <property type="entry name" value="S4_RNA-bd"/>
</dbReference>
<dbReference type="InterPro" id="IPR036986">
    <property type="entry name" value="S4_RNA-bd_sf"/>
</dbReference>
<dbReference type="NCBIfam" id="NF003139">
    <property type="entry name" value="PRK04051.1"/>
    <property type="match status" value="1"/>
</dbReference>
<dbReference type="NCBIfam" id="TIGR01018">
    <property type="entry name" value="uS4_arch"/>
    <property type="match status" value="1"/>
</dbReference>
<dbReference type="PANTHER" id="PTHR11831">
    <property type="entry name" value="30S 40S RIBOSOMAL PROTEIN"/>
    <property type="match status" value="1"/>
</dbReference>
<dbReference type="PANTHER" id="PTHR11831:SF5">
    <property type="entry name" value="40S RIBOSOMAL PROTEIN S9"/>
    <property type="match status" value="1"/>
</dbReference>
<dbReference type="Pfam" id="PF00163">
    <property type="entry name" value="Ribosomal_S4"/>
    <property type="match status" value="1"/>
</dbReference>
<dbReference type="Pfam" id="PF01479">
    <property type="entry name" value="S4"/>
    <property type="match status" value="1"/>
</dbReference>
<dbReference type="SMART" id="SM01390">
    <property type="entry name" value="Ribosomal_S4"/>
    <property type="match status" value="1"/>
</dbReference>
<dbReference type="SMART" id="SM00363">
    <property type="entry name" value="S4"/>
    <property type="match status" value="1"/>
</dbReference>
<dbReference type="SUPFAM" id="SSF55174">
    <property type="entry name" value="Alpha-L RNA-binding motif"/>
    <property type="match status" value="1"/>
</dbReference>
<dbReference type="PROSITE" id="PS00632">
    <property type="entry name" value="RIBOSOMAL_S4"/>
    <property type="match status" value="1"/>
</dbReference>
<dbReference type="PROSITE" id="PS50889">
    <property type="entry name" value="S4"/>
    <property type="match status" value="1"/>
</dbReference>
<gene>
    <name evidence="1" type="primary">rps4</name>
    <name type="ordered locus">Smar_0813</name>
</gene>
<name>RS4_STAMF</name>
<comment type="function">
    <text evidence="1">One of the primary rRNA binding proteins, it binds directly to 16S rRNA where it nucleates assembly of the body of the 30S subunit.</text>
</comment>
<comment type="function">
    <text evidence="1">With S5 and S12 plays an important role in translational accuracy.</text>
</comment>
<comment type="subunit">
    <text evidence="1">Part of the 30S ribosomal subunit. Contacts protein S5. The interaction surface between S4 and S5 is involved in control of translational fidelity.</text>
</comment>
<comment type="similarity">
    <text evidence="1">Belongs to the universal ribosomal protein uS4 family.</text>
</comment>
<proteinExistence type="inferred from homology"/>
<feature type="chain" id="PRO_0000293413" description="Small ribosomal subunit protein uS4">
    <location>
        <begin position="1"/>
        <end position="168"/>
    </location>
</feature>
<feature type="domain" description="S4 RNA-binding" evidence="1">
    <location>
        <begin position="103"/>
        <end position="167"/>
    </location>
</feature>
<sequence length="168" mass="19589">MGDPKKPRKKWEGPRHPWRKEVLVQELKLLGTYGLRNKRELWRAQTIVRKFRHQARSLLAAPQEIREQAEKALLNRLYRLGLLHENASLEDVLGLTVEDLLERRLQTIVYKKGLARTIYHARQLIIHGHIAIAGRRITSPGYIVSREEEDLVDYAPTSPFKKSIEEKA</sequence>
<protein>
    <recommendedName>
        <fullName evidence="1">Small ribosomal subunit protein uS4</fullName>
    </recommendedName>
    <alternativeName>
        <fullName evidence="2">30S ribosomal protein S4</fullName>
    </alternativeName>
</protein>
<organism>
    <name type="scientific">Staphylothermus marinus (strain ATCC 43588 / DSM 3639 / JCM 9404 / F1)</name>
    <dbReference type="NCBI Taxonomy" id="399550"/>
    <lineage>
        <taxon>Archaea</taxon>
        <taxon>Thermoproteota</taxon>
        <taxon>Thermoprotei</taxon>
        <taxon>Desulfurococcales</taxon>
        <taxon>Desulfurococcaceae</taxon>
        <taxon>Staphylothermus</taxon>
    </lineage>
</organism>
<accession>A3DMQ4</accession>
<keyword id="KW-1185">Reference proteome</keyword>
<keyword id="KW-0687">Ribonucleoprotein</keyword>
<keyword id="KW-0689">Ribosomal protein</keyword>
<keyword id="KW-0694">RNA-binding</keyword>
<keyword id="KW-0699">rRNA-binding</keyword>
<reference key="1">
    <citation type="journal article" date="2009" name="BMC Genomics">
        <title>The complete genome sequence of Staphylothermus marinus reveals differences in sulfur metabolism among heterotrophic Crenarchaeota.</title>
        <authorList>
            <person name="Anderson I.J."/>
            <person name="Dharmarajan L."/>
            <person name="Rodriguez J."/>
            <person name="Hooper S."/>
            <person name="Porat I."/>
            <person name="Ulrich L.E."/>
            <person name="Elkins J.G."/>
            <person name="Mavromatis K."/>
            <person name="Sun H."/>
            <person name="Land M."/>
            <person name="Lapidus A."/>
            <person name="Lucas S."/>
            <person name="Barry K."/>
            <person name="Huber H."/>
            <person name="Zhulin I.B."/>
            <person name="Whitman W.B."/>
            <person name="Mukhopadhyay B."/>
            <person name="Woese C."/>
            <person name="Bristow J."/>
            <person name="Kyrpides N."/>
        </authorList>
    </citation>
    <scope>NUCLEOTIDE SEQUENCE [LARGE SCALE GENOMIC DNA]</scope>
    <source>
        <strain>ATCC 43588 / DSM 3639 / JCM 9404 / F1</strain>
    </source>
</reference>
<reference key="2">
    <citation type="journal article" date="2009" name="Stand. Genomic Sci.">
        <title>Complete genome sequence of Staphylothermus marinus Stetter and Fiala 1986 type strain F1.</title>
        <authorList>
            <person name="Anderson I.J."/>
            <person name="Sun H."/>
            <person name="Lapidus A."/>
            <person name="Copeland A."/>
            <person name="Glavina Del Rio T."/>
            <person name="Tice H."/>
            <person name="Dalin E."/>
            <person name="Lucas S."/>
            <person name="Barry K."/>
            <person name="Land M."/>
            <person name="Richardson P."/>
            <person name="Huber H."/>
            <person name="Kyrpides N.C."/>
        </authorList>
    </citation>
    <scope>NUCLEOTIDE SEQUENCE [LARGE SCALE GENOMIC DNA]</scope>
    <source>
        <strain>ATCC 43588 / DSM 3639 / JCM 9404 / F1</strain>
    </source>
</reference>